<evidence type="ECO:0000255" key="1">
    <source>
        <dbReference type="HAMAP-Rule" id="MF_00169"/>
    </source>
</evidence>
<dbReference type="EC" id="4.2.1.10" evidence="1"/>
<dbReference type="EMBL" id="CP000644">
    <property type="protein sequence ID" value="ABO89097.1"/>
    <property type="molecule type" value="Genomic_DNA"/>
</dbReference>
<dbReference type="RefSeq" id="WP_005317649.1">
    <property type="nucleotide sequence ID" value="NC_009348.1"/>
</dbReference>
<dbReference type="SMR" id="A4SJM5"/>
<dbReference type="STRING" id="29491.GCA_000820065_01219"/>
<dbReference type="KEGG" id="asa:ASA_0966"/>
<dbReference type="eggNOG" id="COG0757">
    <property type="taxonomic scope" value="Bacteria"/>
</dbReference>
<dbReference type="HOGENOM" id="CLU_090968_1_0_6"/>
<dbReference type="UniPathway" id="UPA00053">
    <property type="reaction ID" value="UER00086"/>
</dbReference>
<dbReference type="Proteomes" id="UP000000225">
    <property type="component" value="Chromosome"/>
</dbReference>
<dbReference type="GO" id="GO:0003855">
    <property type="term" value="F:3-dehydroquinate dehydratase activity"/>
    <property type="evidence" value="ECO:0007669"/>
    <property type="project" value="UniProtKB-UniRule"/>
</dbReference>
<dbReference type="GO" id="GO:0008652">
    <property type="term" value="P:amino acid biosynthetic process"/>
    <property type="evidence" value="ECO:0007669"/>
    <property type="project" value="UniProtKB-KW"/>
</dbReference>
<dbReference type="GO" id="GO:0009073">
    <property type="term" value="P:aromatic amino acid family biosynthetic process"/>
    <property type="evidence" value="ECO:0007669"/>
    <property type="project" value="UniProtKB-KW"/>
</dbReference>
<dbReference type="GO" id="GO:0009423">
    <property type="term" value="P:chorismate biosynthetic process"/>
    <property type="evidence" value="ECO:0007669"/>
    <property type="project" value="UniProtKB-UniRule"/>
</dbReference>
<dbReference type="GO" id="GO:0019631">
    <property type="term" value="P:quinate catabolic process"/>
    <property type="evidence" value="ECO:0007669"/>
    <property type="project" value="TreeGrafter"/>
</dbReference>
<dbReference type="CDD" id="cd00466">
    <property type="entry name" value="DHQase_II"/>
    <property type="match status" value="1"/>
</dbReference>
<dbReference type="Gene3D" id="3.40.50.9100">
    <property type="entry name" value="Dehydroquinase, class II"/>
    <property type="match status" value="1"/>
</dbReference>
<dbReference type="HAMAP" id="MF_00169">
    <property type="entry name" value="AroQ"/>
    <property type="match status" value="1"/>
</dbReference>
<dbReference type="InterPro" id="IPR001874">
    <property type="entry name" value="DHquinase_II"/>
</dbReference>
<dbReference type="InterPro" id="IPR018509">
    <property type="entry name" value="DHquinase_II_CS"/>
</dbReference>
<dbReference type="InterPro" id="IPR036441">
    <property type="entry name" value="DHquinase_II_sf"/>
</dbReference>
<dbReference type="NCBIfam" id="TIGR01088">
    <property type="entry name" value="aroQ"/>
    <property type="match status" value="1"/>
</dbReference>
<dbReference type="NCBIfam" id="NF003804">
    <property type="entry name" value="PRK05395.1-1"/>
    <property type="match status" value="1"/>
</dbReference>
<dbReference type="NCBIfam" id="NF003805">
    <property type="entry name" value="PRK05395.1-2"/>
    <property type="match status" value="1"/>
</dbReference>
<dbReference type="NCBIfam" id="NF003806">
    <property type="entry name" value="PRK05395.1-3"/>
    <property type="match status" value="1"/>
</dbReference>
<dbReference type="NCBIfam" id="NF003807">
    <property type="entry name" value="PRK05395.1-4"/>
    <property type="match status" value="1"/>
</dbReference>
<dbReference type="PANTHER" id="PTHR21272">
    <property type="entry name" value="CATABOLIC 3-DEHYDROQUINASE"/>
    <property type="match status" value="1"/>
</dbReference>
<dbReference type="PANTHER" id="PTHR21272:SF3">
    <property type="entry name" value="CATABOLIC 3-DEHYDROQUINASE"/>
    <property type="match status" value="1"/>
</dbReference>
<dbReference type="Pfam" id="PF01220">
    <property type="entry name" value="DHquinase_II"/>
    <property type="match status" value="1"/>
</dbReference>
<dbReference type="PIRSF" id="PIRSF001399">
    <property type="entry name" value="DHquinase_II"/>
    <property type="match status" value="1"/>
</dbReference>
<dbReference type="SUPFAM" id="SSF52304">
    <property type="entry name" value="Type II 3-dehydroquinate dehydratase"/>
    <property type="match status" value="1"/>
</dbReference>
<dbReference type="PROSITE" id="PS01029">
    <property type="entry name" value="DEHYDROQUINASE_II"/>
    <property type="match status" value="1"/>
</dbReference>
<gene>
    <name evidence="1" type="primary">aroQ</name>
    <name type="ordered locus">ASA_0966</name>
</gene>
<feature type="chain" id="PRO_1000023448" description="3-dehydroquinate dehydratase">
    <location>
        <begin position="1"/>
        <end position="149"/>
    </location>
</feature>
<feature type="active site" description="Proton acceptor" evidence="1">
    <location>
        <position position="26"/>
    </location>
</feature>
<feature type="active site" description="Proton donor" evidence="1">
    <location>
        <position position="103"/>
    </location>
</feature>
<feature type="binding site" evidence="1">
    <location>
        <position position="77"/>
    </location>
    <ligand>
        <name>substrate</name>
    </ligand>
</feature>
<feature type="binding site" evidence="1">
    <location>
        <position position="83"/>
    </location>
    <ligand>
        <name>substrate</name>
    </ligand>
</feature>
<feature type="binding site" evidence="1">
    <location>
        <position position="90"/>
    </location>
    <ligand>
        <name>substrate</name>
    </ligand>
</feature>
<feature type="binding site" evidence="1">
    <location>
        <begin position="104"/>
        <end position="105"/>
    </location>
    <ligand>
        <name>substrate</name>
    </ligand>
</feature>
<feature type="binding site" evidence="1">
    <location>
        <position position="114"/>
    </location>
    <ligand>
        <name>substrate</name>
    </ligand>
</feature>
<feature type="site" description="Transition state stabilizer" evidence="1">
    <location>
        <position position="21"/>
    </location>
</feature>
<reference key="1">
    <citation type="journal article" date="2008" name="BMC Genomics">
        <title>The genome of Aeromonas salmonicida subsp. salmonicida A449: insights into the evolution of a fish pathogen.</title>
        <authorList>
            <person name="Reith M.E."/>
            <person name="Singh R.K."/>
            <person name="Curtis B."/>
            <person name="Boyd J.M."/>
            <person name="Bouevitch A."/>
            <person name="Kimball J."/>
            <person name="Munholland J."/>
            <person name="Murphy C."/>
            <person name="Sarty D."/>
            <person name="Williams J."/>
            <person name="Nash J.H."/>
            <person name="Johnson S.C."/>
            <person name="Brown L.L."/>
        </authorList>
    </citation>
    <scope>NUCLEOTIDE SEQUENCE [LARGE SCALE GENOMIC DNA]</scope>
    <source>
        <strain>A449</strain>
    </source>
</reference>
<protein>
    <recommendedName>
        <fullName evidence="1">3-dehydroquinate dehydratase</fullName>
        <shortName evidence="1">3-dehydroquinase</shortName>
        <ecNumber evidence="1">4.2.1.10</ecNumber>
    </recommendedName>
    <alternativeName>
        <fullName evidence="1">Type II DHQase</fullName>
    </alternativeName>
</protein>
<comment type="function">
    <text evidence="1">Catalyzes a trans-dehydration via an enolate intermediate.</text>
</comment>
<comment type="catalytic activity">
    <reaction evidence="1">
        <text>3-dehydroquinate = 3-dehydroshikimate + H2O</text>
        <dbReference type="Rhea" id="RHEA:21096"/>
        <dbReference type="ChEBI" id="CHEBI:15377"/>
        <dbReference type="ChEBI" id="CHEBI:16630"/>
        <dbReference type="ChEBI" id="CHEBI:32364"/>
        <dbReference type="EC" id="4.2.1.10"/>
    </reaction>
</comment>
<comment type="pathway">
    <text evidence="1">Metabolic intermediate biosynthesis; chorismate biosynthesis; chorismate from D-erythrose 4-phosphate and phosphoenolpyruvate: step 3/7.</text>
</comment>
<comment type="subunit">
    <text evidence="1">Homododecamer.</text>
</comment>
<comment type="similarity">
    <text evidence="1">Belongs to the type-II 3-dehydroquinase family.</text>
</comment>
<accession>A4SJM5</accession>
<organism>
    <name type="scientific">Aeromonas salmonicida (strain A449)</name>
    <dbReference type="NCBI Taxonomy" id="382245"/>
    <lineage>
        <taxon>Bacteria</taxon>
        <taxon>Pseudomonadati</taxon>
        <taxon>Pseudomonadota</taxon>
        <taxon>Gammaproteobacteria</taxon>
        <taxon>Aeromonadales</taxon>
        <taxon>Aeromonadaceae</taxon>
        <taxon>Aeromonas</taxon>
    </lineage>
</organism>
<keyword id="KW-0028">Amino-acid biosynthesis</keyword>
<keyword id="KW-0057">Aromatic amino acid biosynthesis</keyword>
<keyword id="KW-0456">Lyase</keyword>
<name>AROQ_AERS4</name>
<sequence>MSQNHRILLLNGPNLNLLGKREPGIYGSKTLDEIVADLKHNAIELGVTLEHLQSNAEHELVSRIHQAMGQVDYIIINPAAFTHTSVAIRDALLGVAIPFIEVHLSNVHAREPFRHHSYLSDVAKGVICGLGADGYQFALTAAVHQLRAA</sequence>
<proteinExistence type="inferred from homology"/>